<keyword id="KW-0072">Autophagy</keyword>
<keyword id="KW-0967">Endosome</keyword>
<keyword id="KW-0446">Lipid-binding</keyword>
<keyword id="KW-0472">Membrane</keyword>
<keyword id="KW-0653">Protein transport</keyword>
<keyword id="KW-1185">Reference proteome</keyword>
<keyword id="KW-0813">Transport</keyword>
<sequence length="681" mass="78368">MSTDNLFEDIEQDNNPSFYGNPSILNDPYRPIQPPPPQQQQQQHQENESKQSHTKSPKPPLQSIHSGTSNAHPQSQPQHKHKHKHNTSLNNGYPNELVNSTIGLSNRILELLNDSQLQVDIINSEKLVNSSVIVYTIELSSPTTKIVVKRRYSEFKSLRDNLLKLFPTLIIPPIPEKHSILSYLLNTINHSHEISIIEMRKRYFKMFLDDLIFQSDYKLKNCPLLHKFFDPNYELCWYNALNEPPVSLIPDNLLLANPINPADQNGLYSLLPIVNGFDFNSHIDNLSNLKKINEDLYKLNDQVKLYELKGFEQDLEFSIPEELIQFEIKFHQTIKILTDLNKLNSKTTKNYKSMVDTLIDLGGNLNNFSLQVYQQKSGSNNELSEAIEKFGSTMDQSFLNFESFILNQLVPQWQEPVDQLILYLQNSLGLIKFYKYKIVQFKILYKLKFNKFQQLINLTNIGGVSSSGSGGGGLLASRISTDNDSNNSNNSGNNNNDGDLDTENFDHLKELNSPTINNALKNLSTKKISKKSSWYGLFGGNNQTKKFNFQLPIEEPTTATGSTEQQSQQQSAPNSPQREQQQQQSQSQSHHSHQTSIRFKLNHIEKELNKLNQLIELCNQDMHKLTEALVNTFEEFLSKIERKWLQLMITYIQNCKNMFEANLTNWKEFKESLVNETREVN</sequence>
<feature type="chain" id="PRO_0000213826" description="Sorting nexin-41">
    <location>
        <begin position="1"/>
        <end position="681"/>
    </location>
</feature>
<feature type="domain" description="PX" evidence="2">
    <location>
        <begin position="113"/>
        <end position="236"/>
    </location>
</feature>
<feature type="region of interest" description="Disordered" evidence="3">
    <location>
        <begin position="1"/>
        <end position="94"/>
    </location>
</feature>
<feature type="region of interest" description="Disordered" evidence="3">
    <location>
        <begin position="475"/>
        <end position="505"/>
    </location>
</feature>
<feature type="region of interest" description="Disordered" evidence="3">
    <location>
        <begin position="558"/>
        <end position="597"/>
    </location>
</feature>
<feature type="compositionally biased region" description="Acidic residues" evidence="3">
    <location>
        <begin position="1"/>
        <end position="12"/>
    </location>
</feature>
<feature type="compositionally biased region" description="Polar residues" evidence="3">
    <location>
        <begin position="13"/>
        <end position="24"/>
    </location>
</feature>
<feature type="compositionally biased region" description="Low complexity" evidence="3">
    <location>
        <begin position="482"/>
        <end position="497"/>
    </location>
</feature>
<feature type="compositionally biased region" description="Low complexity" evidence="3">
    <location>
        <begin position="558"/>
        <end position="589"/>
    </location>
</feature>
<feature type="binding site" evidence="1">
    <location>
        <position position="151"/>
    </location>
    <ligand>
        <name>a 1,2-diacyl-sn-glycero-3-phospho-(1D-myo-inositol-3-phosphate)</name>
        <dbReference type="ChEBI" id="CHEBI:58088"/>
    </ligand>
</feature>
<feature type="binding site" evidence="1">
    <location>
        <position position="153"/>
    </location>
    <ligand>
        <name>a 1,2-diacyl-sn-glycero-3-phospho-(1D-myo-inositol-3-phosphate)</name>
        <dbReference type="ChEBI" id="CHEBI:58088"/>
    </ligand>
</feature>
<feature type="binding site" evidence="1">
    <location>
        <position position="177"/>
    </location>
    <ligand>
        <name>a 1,2-diacyl-sn-glycero-3-phospho-(1D-myo-inositol-3-phosphate)</name>
        <dbReference type="ChEBI" id="CHEBI:58088"/>
    </ligand>
</feature>
<feature type="binding site" evidence="1">
    <location>
        <position position="200"/>
    </location>
    <ligand>
        <name>a 1,2-diacyl-sn-glycero-3-phospho-(1D-myo-inositol-3-phosphate)</name>
        <dbReference type="ChEBI" id="CHEBI:58088"/>
    </ligand>
</feature>
<accession>Q5AD73</accession>
<accession>A0A1D8PGB4</accession>
<proteinExistence type="inferred from homology"/>
<dbReference type="EMBL" id="CP017624">
    <property type="protein sequence ID" value="AOW27177.1"/>
    <property type="molecule type" value="Genomic_DNA"/>
</dbReference>
<dbReference type="RefSeq" id="XP_719444.2">
    <property type="nucleotide sequence ID" value="XM_714351.2"/>
</dbReference>
<dbReference type="STRING" id="237561.Q5AD73"/>
<dbReference type="EnsemblFungi" id="C2_01310W_A-T">
    <property type="protein sequence ID" value="C2_01310W_A-T-p1"/>
    <property type="gene ID" value="C2_01310W_A"/>
</dbReference>
<dbReference type="GeneID" id="3638788"/>
<dbReference type="KEGG" id="cal:CAALFM_C201310WA"/>
<dbReference type="CGD" id="CAL0000183027">
    <property type="gene designation" value="orf19.9546"/>
</dbReference>
<dbReference type="VEuPathDB" id="FungiDB:C2_01310W_A"/>
<dbReference type="eggNOG" id="KOG2273">
    <property type="taxonomic scope" value="Eukaryota"/>
</dbReference>
<dbReference type="HOGENOM" id="CLU_025790_0_0_1"/>
<dbReference type="InParanoid" id="Q5AD73"/>
<dbReference type="OrthoDB" id="289314at2759"/>
<dbReference type="PRO" id="PR:Q5AD73"/>
<dbReference type="Proteomes" id="UP000000559">
    <property type="component" value="Chromosome 2"/>
</dbReference>
<dbReference type="GO" id="GO:0005829">
    <property type="term" value="C:cytosol"/>
    <property type="evidence" value="ECO:0007669"/>
    <property type="project" value="GOC"/>
</dbReference>
<dbReference type="GO" id="GO:0010008">
    <property type="term" value="C:endosome membrane"/>
    <property type="evidence" value="ECO:0007669"/>
    <property type="project" value="UniProtKB-SubCell"/>
</dbReference>
<dbReference type="GO" id="GO:0000407">
    <property type="term" value="C:phagophore assembly site"/>
    <property type="evidence" value="ECO:0000318"/>
    <property type="project" value="GO_Central"/>
</dbReference>
<dbReference type="GO" id="GO:0032266">
    <property type="term" value="F:phosphatidylinositol-3-phosphate binding"/>
    <property type="evidence" value="ECO:0000318"/>
    <property type="project" value="GO_Central"/>
</dbReference>
<dbReference type="GO" id="GO:0000422">
    <property type="term" value="P:autophagy of mitochondrion"/>
    <property type="evidence" value="ECO:0000318"/>
    <property type="project" value="GO_Central"/>
</dbReference>
<dbReference type="GO" id="GO:0015031">
    <property type="term" value="P:protein transport"/>
    <property type="evidence" value="ECO:0007669"/>
    <property type="project" value="UniProtKB-KW"/>
</dbReference>
<dbReference type="GO" id="GO:0061709">
    <property type="term" value="P:reticulophagy"/>
    <property type="evidence" value="ECO:0000318"/>
    <property type="project" value="GO_Central"/>
</dbReference>
<dbReference type="GO" id="GO:0042147">
    <property type="term" value="P:retrograde transport, endosome to Golgi"/>
    <property type="evidence" value="ECO:0007669"/>
    <property type="project" value="InterPro"/>
</dbReference>
<dbReference type="CDD" id="cd06867">
    <property type="entry name" value="PX_SNX41_42"/>
    <property type="match status" value="1"/>
</dbReference>
<dbReference type="Gene3D" id="3.30.1520.10">
    <property type="entry name" value="Phox-like domain"/>
    <property type="match status" value="1"/>
</dbReference>
<dbReference type="InterPro" id="IPR001683">
    <property type="entry name" value="PX_dom"/>
</dbReference>
<dbReference type="InterPro" id="IPR036871">
    <property type="entry name" value="PX_dom_sf"/>
</dbReference>
<dbReference type="InterPro" id="IPR044106">
    <property type="entry name" value="PX_Snx41/Atg20"/>
</dbReference>
<dbReference type="InterPro" id="IPR051079">
    <property type="entry name" value="Sorting_Nexin_Autophagy"/>
</dbReference>
<dbReference type="PANTHER" id="PTHR46979">
    <property type="entry name" value="SORTING NEXIN-41"/>
    <property type="match status" value="1"/>
</dbReference>
<dbReference type="PANTHER" id="PTHR46979:SF2">
    <property type="entry name" value="SORTING NEXIN-41"/>
    <property type="match status" value="1"/>
</dbReference>
<dbReference type="Pfam" id="PF00787">
    <property type="entry name" value="PX"/>
    <property type="match status" value="1"/>
</dbReference>
<dbReference type="SMART" id="SM00312">
    <property type="entry name" value="PX"/>
    <property type="match status" value="1"/>
</dbReference>
<dbReference type="SUPFAM" id="SSF64268">
    <property type="entry name" value="PX domain"/>
    <property type="match status" value="1"/>
</dbReference>
<dbReference type="PROSITE" id="PS50195">
    <property type="entry name" value="PX"/>
    <property type="match status" value="1"/>
</dbReference>
<organism>
    <name type="scientific">Candida albicans (strain SC5314 / ATCC MYA-2876)</name>
    <name type="common">Yeast</name>
    <dbReference type="NCBI Taxonomy" id="237561"/>
    <lineage>
        <taxon>Eukaryota</taxon>
        <taxon>Fungi</taxon>
        <taxon>Dikarya</taxon>
        <taxon>Ascomycota</taxon>
        <taxon>Saccharomycotina</taxon>
        <taxon>Pichiomycetes</taxon>
        <taxon>Debaryomycetaceae</taxon>
        <taxon>Candida/Lodderomyces clade</taxon>
        <taxon>Candida</taxon>
    </lineage>
</organism>
<reference key="1">
    <citation type="journal article" date="2004" name="Proc. Natl. Acad. Sci. U.S.A.">
        <title>The diploid genome sequence of Candida albicans.</title>
        <authorList>
            <person name="Jones T."/>
            <person name="Federspiel N.A."/>
            <person name="Chibana H."/>
            <person name="Dungan J."/>
            <person name="Kalman S."/>
            <person name="Magee B.B."/>
            <person name="Newport G."/>
            <person name="Thorstenson Y.R."/>
            <person name="Agabian N."/>
            <person name="Magee P.T."/>
            <person name="Davis R.W."/>
            <person name="Scherer S."/>
        </authorList>
    </citation>
    <scope>NUCLEOTIDE SEQUENCE [LARGE SCALE GENOMIC DNA]</scope>
    <source>
        <strain>SC5314 / ATCC MYA-2876</strain>
    </source>
</reference>
<reference key="2">
    <citation type="journal article" date="2007" name="Genome Biol.">
        <title>Assembly of the Candida albicans genome into sixteen supercontigs aligned on the eight chromosomes.</title>
        <authorList>
            <person name="van het Hoog M."/>
            <person name="Rast T.J."/>
            <person name="Martchenko M."/>
            <person name="Grindle S."/>
            <person name="Dignard D."/>
            <person name="Hogues H."/>
            <person name="Cuomo C."/>
            <person name="Berriman M."/>
            <person name="Scherer S."/>
            <person name="Magee B.B."/>
            <person name="Whiteway M."/>
            <person name="Chibana H."/>
            <person name="Nantel A."/>
            <person name="Magee P.T."/>
        </authorList>
    </citation>
    <scope>GENOME REANNOTATION</scope>
    <source>
        <strain>SC5314 / ATCC MYA-2876</strain>
    </source>
</reference>
<reference key="3">
    <citation type="journal article" date="2013" name="Genome Biol.">
        <title>Assembly of a phased diploid Candida albicans genome facilitates allele-specific measurements and provides a simple model for repeat and indel structure.</title>
        <authorList>
            <person name="Muzzey D."/>
            <person name="Schwartz K."/>
            <person name="Weissman J.S."/>
            <person name="Sherlock G."/>
        </authorList>
    </citation>
    <scope>NUCLEOTIDE SEQUENCE [LARGE SCALE GENOMIC DNA]</scope>
    <scope>GENOME REANNOTATION</scope>
    <source>
        <strain>SC5314 / ATCC MYA-2876</strain>
    </source>
</reference>
<name>SNX41_CANAL</name>
<comment type="function">
    <text evidence="1">May be required for cytoplasm to vacuole transport (Cvt) and pexophagy.</text>
</comment>
<comment type="subcellular location">
    <subcellularLocation>
        <location evidence="1">Endosome membrane</location>
        <topology evidence="1">Peripheral membrane protein</topology>
    </subcellularLocation>
    <subcellularLocation>
        <location evidence="1">Endomembrane system</location>
        <topology evidence="1">Peripheral membrane protein</topology>
    </subcellularLocation>
    <text evidence="1">Endosome and other perivacuolar punctate structures.</text>
</comment>
<comment type="domain">
    <text evidence="1">The PX domain binds phosphatidylinositol 3-phosphate which is necessary for peripheral membrane localization to the perivacuolar punctate structures.</text>
</comment>
<comment type="similarity">
    <text evidence="4">Belongs to the sorting nexin family.</text>
</comment>
<evidence type="ECO:0000250" key="1"/>
<evidence type="ECO:0000255" key="2">
    <source>
        <dbReference type="PROSITE-ProRule" id="PRU00147"/>
    </source>
</evidence>
<evidence type="ECO:0000256" key="3">
    <source>
        <dbReference type="SAM" id="MobiDB-lite"/>
    </source>
</evidence>
<evidence type="ECO:0000305" key="4"/>
<gene>
    <name type="primary">SNX41</name>
    <name type="ordered locus">CAALFM_C201310WA</name>
    <name type="ORF">CaO19.1994</name>
    <name type="ORF">CaO19.9546</name>
</gene>
<protein>
    <recommendedName>
        <fullName>Sorting nexin-41</fullName>
    </recommendedName>
</protein>